<gene>
    <name evidence="1" type="primary">rhlB</name>
    <name type="ordered locus">ECDH10B_3969</name>
</gene>
<evidence type="ECO:0000255" key="1">
    <source>
        <dbReference type="HAMAP-Rule" id="MF_00661"/>
    </source>
</evidence>
<evidence type="ECO:0000256" key="2">
    <source>
        <dbReference type="SAM" id="MobiDB-lite"/>
    </source>
</evidence>
<comment type="function">
    <text evidence="1">DEAD-box RNA helicase involved in RNA degradation. Has RNA-dependent ATPase activity and unwinds double-stranded RNA.</text>
</comment>
<comment type="catalytic activity">
    <reaction evidence="1">
        <text>ATP + H2O = ADP + phosphate + H(+)</text>
        <dbReference type="Rhea" id="RHEA:13065"/>
        <dbReference type="ChEBI" id="CHEBI:15377"/>
        <dbReference type="ChEBI" id="CHEBI:15378"/>
        <dbReference type="ChEBI" id="CHEBI:30616"/>
        <dbReference type="ChEBI" id="CHEBI:43474"/>
        <dbReference type="ChEBI" id="CHEBI:456216"/>
        <dbReference type="EC" id="3.6.4.13"/>
    </reaction>
</comment>
<comment type="subunit">
    <text evidence="1">Component of the RNA degradosome, which is a multiprotein complex involved in RNA processing and mRNA degradation.</text>
</comment>
<comment type="subcellular location">
    <subcellularLocation>
        <location evidence="1">Cytoplasm</location>
    </subcellularLocation>
</comment>
<comment type="similarity">
    <text evidence="1">Belongs to the DEAD box helicase family. RhlB subfamily.</text>
</comment>
<dbReference type="EC" id="3.6.4.13" evidence="1"/>
<dbReference type="EMBL" id="CP000948">
    <property type="protein sequence ID" value="ACB04809.1"/>
    <property type="molecule type" value="Genomic_DNA"/>
</dbReference>
<dbReference type="RefSeq" id="WP_000047499.1">
    <property type="nucleotide sequence ID" value="NC_010473.1"/>
</dbReference>
<dbReference type="SMR" id="B1X9Z4"/>
<dbReference type="GeneID" id="93778164"/>
<dbReference type="KEGG" id="ecd:ECDH10B_3969"/>
<dbReference type="HOGENOM" id="CLU_003041_1_3_6"/>
<dbReference type="GO" id="GO:0005829">
    <property type="term" value="C:cytosol"/>
    <property type="evidence" value="ECO:0007669"/>
    <property type="project" value="TreeGrafter"/>
</dbReference>
<dbReference type="GO" id="GO:0005524">
    <property type="term" value="F:ATP binding"/>
    <property type="evidence" value="ECO:0007669"/>
    <property type="project" value="UniProtKB-UniRule"/>
</dbReference>
<dbReference type="GO" id="GO:0016887">
    <property type="term" value="F:ATP hydrolysis activity"/>
    <property type="evidence" value="ECO:0007669"/>
    <property type="project" value="RHEA"/>
</dbReference>
<dbReference type="GO" id="GO:0003723">
    <property type="term" value="F:RNA binding"/>
    <property type="evidence" value="ECO:0007669"/>
    <property type="project" value="UniProtKB-UniRule"/>
</dbReference>
<dbReference type="GO" id="GO:0003724">
    <property type="term" value="F:RNA helicase activity"/>
    <property type="evidence" value="ECO:0007669"/>
    <property type="project" value="UniProtKB-UniRule"/>
</dbReference>
<dbReference type="GO" id="GO:0006401">
    <property type="term" value="P:RNA catabolic process"/>
    <property type="evidence" value="ECO:0007669"/>
    <property type="project" value="UniProtKB-UniRule"/>
</dbReference>
<dbReference type="CDD" id="cd00268">
    <property type="entry name" value="DEADc"/>
    <property type="match status" value="1"/>
</dbReference>
<dbReference type="CDD" id="cd18787">
    <property type="entry name" value="SF2_C_DEAD"/>
    <property type="match status" value="1"/>
</dbReference>
<dbReference type="FunFam" id="3.40.50.300:FF:000008">
    <property type="entry name" value="ATP-dependent RNA helicase RhlB"/>
    <property type="match status" value="1"/>
</dbReference>
<dbReference type="FunFam" id="3.40.50.300:FF:000312">
    <property type="entry name" value="ATP-dependent RNA helicase RhlB"/>
    <property type="match status" value="1"/>
</dbReference>
<dbReference type="Gene3D" id="3.40.50.300">
    <property type="entry name" value="P-loop containing nucleotide triphosphate hydrolases"/>
    <property type="match status" value="2"/>
</dbReference>
<dbReference type="HAMAP" id="MF_00661">
    <property type="entry name" value="DEAD_helicase_RhlB"/>
    <property type="match status" value="1"/>
</dbReference>
<dbReference type="InterPro" id="IPR011545">
    <property type="entry name" value="DEAD/DEAH_box_helicase_dom"/>
</dbReference>
<dbReference type="InterPro" id="IPR050079">
    <property type="entry name" value="DEAD_box_RNA_helicase"/>
</dbReference>
<dbReference type="InterPro" id="IPR014001">
    <property type="entry name" value="Helicase_ATP-bd"/>
</dbReference>
<dbReference type="InterPro" id="IPR001650">
    <property type="entry name" value="Helicase_C-like"/>
</dbReference>
<dbReference type="InterPro" id="IPR027417">
    <property type="entry name" value="P-loop_NTPase"/>
</dbReference>
<dbReference type="InterPro" id="IPR000629">
    <property type="entry name" value="RNA-helicase_DEAD-box_CS"/>
</dbReference>
<dbReference type="InterPro" id="IPR023554">
    <property type="entry name" value="RNA_helicase_ATP-dep_RhlB"/>
</dbReference>
<dbReference type="InterPro" id="IPR014014">
    <property type="entry name" value="RNA_helicase_DEAD_Q_motif"/>
</dbReference>
<dbReference type="NCBIfam" id="NF003419">
    <property type="entry name" value="PRK04837.1"/>
    <property type="match status" value="1"/>
</dbReference>
<dbReference type="PANTHER" id="PTHR47959:SF10">
    <property type="entry name" value="ATP-DEPENDENT RNA HELICASE RHLB"/>
    <property type="match status" value="1"/>
</dbReference>
<dbReference type="PANTHER" id="PTHR47959">
    <property type="entry name" value="ATP-DEPENDENT RNA HELICASE RHLE-RELATED"/>
    <property type="match status" value="1"/>
</dbReference>
<dbReference type="Pfam" id="PF00270">
    <property type="entry name" value="DEAD"/>
    <property type="match status" value="1"/>
</dbReference>
<dbReference type="Pfam" id="PF00271">
    <property type="entry name" value="Helicase_C"/>
    <property type="match status" value="1"/>
</dbReference>
<dbReference type="SMART" id="SM00487">
    <property type="entry name" value="DEXDc"/>
    <property type="match status" value="1"/>
</dbReference>
<dbReference type="SMART" id="SM00490">
    <property type="entry name" value="HELICc"/>
    <property type="match status" value="1"/>
</dbReference>
<dbReference type="SUPFAM" id="SSF52540">
    <property type="entry name" value="P-loop containing nucleoside triphosphate hydrolases"/>
    <property type="match status" value="1"/>
</dbReference>
<dbReference type="PROSITE" id="PS00039">
    <property type="entry name" value="DEAD_ATP_HELICASE"/>
    <property type="match status" value="1"/>
</dbReference>
<dbReference type="PROSITE" id="PS51192">
    <property type="entry name" value="HELICASE_ATP_BIND_1"/>
    <property type="match status" value="1"/>
</dbReference>
<dbReference type="PROSITE" id="PS51194">
    <property type="entry name" value="HELICASE_CTER"/>
    <property type="match status" value="1"/>
</dbReference>
<dbReference type="PROSITE" id="PS51195">
    <property type="entry name" value="Q_MOTIF"/>
    <property type="match status" value="1"/>
</dbReference>
<accession>B1X9Z4</accession>
<keyword id="KW-0067">ATP-binding</keyword>
<keyword id="KW-0963">Cytoplasm</keyword>
<keyword id="KW-0347">Helicase</keyword>
<keyword id="KW-0378">Hydrolase</keyword>
<keyword id="KW-0547">Nucleotide-binding</keyword>
<keyword id="KW-0694">RNA-binding</keyword>
<name>RHLB_ECODH</name>
<feature type="chain" id="PRO_1000131290" description="ATP-dependent RNA helicase RhlB">
    <location>
        <begin position="1"/>
        <end position="421"/>
    </location>
</feature>
<feature type="domain" description="Helicase ATP-binding" evidence="1">
    <location>
        <begin position="40"/>
        <end position="219"/>
    </location>
</feature>
<feature type="domain" description="Helicase C-terminal" evidence="1">
    <location>
        <begin position="245"/>
        <end position="390"/>
    </location>
</feature>
<feature type="region of interest" description="Disordered" evidence="2">
    <location>
        <begin position="392"/>
        <end position="421"/>
    </location>
</feature>
<feature type="short sequence motif" description="Q motif">
    <location>
        <begin position="9"/>
        <end position="37"/>
    </location>
</feature>
<feature type="short sequence motif" description="DEAD box">
    <location>
        <begin position="165"/>
        <end position="168"/>
    </location>
</feature>
<feature type="compositionally biased region" description="Low complexity" evidence="2">
    <location>
        <begin position="402"/>
        <end position="414"/>
    </location>
</feature>
<feature type="binding site" evidence="1">
    <location>
        <begin position="53"/>
        <end position="60"/>
    </location>
    <ligand>
        <name>ATP</name>
        <dbReference type="ChEBI" id="CHEBI:30616"/>
    </ligand>
</feature>
<proteinExistence type="inferred from homology"/>
<reference key="1">
    <citation type="journal article" date="2008" name="J. Bacteriol.">
        <title>The complete genome sequence of Escherichia coli DH10B: insights into the biology of a laboratory workhorse.</title>
        <authorList>
            <person name="Durfee T."/>
            <person name="Nelson R."/>
            <person name="Baldwin S."/>
            <person name="Plunkett G. III"/>
            <person name="Burland V."/>
            <person name="Mau B."/>
            <person name="Petrosino J.F."/>
            <person name="Qin X."/>
            <person name="Muzny D.M."/>
            <person name="Ayele M."/>
            <person name="Gibbs R.A."/>
            <person name="Csorgo B."/>
            <person name="Posfai G."/>
            <person name="Weinstock G.M."/>
            <person name="Blattner F.R."/>
        </authorList>
    </citation>
    <scope>NUCLEOTIDE SEQUENCE [LARGE SCALE GENOMIC DNA]</scope>
    <source>
        <strain>K12 / DH10B</strain>
    </source>
</reference>
<protein>
    <recommendedName>
        <fullName evidence="1">ATP-dependent RNA helicase RhlB</fullName>
        <ecNumber evidence="1">3.6.4.13</ecNumber>
    </recommendedName>
</protein>
<sequence>MSKTHLTEQKFSDFALHPKVVEALEKKGFHNCTPIQALALPLTLAGRDVAGQAQTGTGKTMAFLTSTFHYLLSHPAIADRKVNQPRALIMAPTRELAVQIHADAEPLAEATGLKLGLAYGGDGYDKQLKVLESGVDILIGTTGRLIDYAKQNHINLGAIQVVVLDEADRMYDLGFIKDIRWLFRRMPPANQRLNMLFSATLSYRVRELAFEQMNNAEYIEVEPEQKTGHRIKEELFYPSNEEKMRLLQTLIEEEWPDRAIIFANTKHRCEEIWGHLAADGHRVGLLTGDVAQKKRLRILDEFTRGDLDILVATDVAARGLHIPAVTHVFNYDLPDDCEDYVHRIGRTGRAGASGHSISLACEEYALNLPAIETYIGHSIPVSKYNPDALMTDLPKPLRLTRPRTGNGPRRTGAPRNRRRSG</sequence>
<organism>
    <name type="scientific">Escherichia coli (strain K12 / DH10B)</name>
    <dbReference type="NCBI Taxonomy" id="316385"/>
    <lineage>
        <taxon>Bacteria</taxon>
        <taxon>Pseudomonadati</taxon>
        <taxon>Pseudomonadota</taxon>
        <taxon>Gammaproteobacteria</taxon>
        <taxon>Enterobacterales</taxon>
        <taxon>Enterobacteriaceae</taxon>
        <taxon>Escherichia</taxon>
    </lineage>
</organism>